<evidence type="ECO:0000250" key="1"/>
<evidence type="ECO:0000255" key="2"/>
<evidence type="ECO:0000256" key="3">
    <source>
        <dbReference type="SAM" id="MobiDB-lite"/>
    </source>
</evidence>
<evidence type="ECO:0000269" key="4">
    <source>
    </source>
</evidence>
<evidence type="ECO:0000269" key="5">
    <source>
    </source>
</evidence>
<evidence type="ECO:0000269" key="6">
    <source>
    </source>
</evidence>
<evidence type="ECO:0000269" key="7">
    <source>
    </source>
</evidence>
<evidence type="ECO:0000269" key="8">
    <source>
    </source>
</evidence>
<evidence type="ECO:0000305" key="9"/>
<evidence type="ECO:0007744" key="10">
    <source>
    </source>
</evidence>
<evidence type="ECO:0007744" key="11">
    <source>
    </source>
</evidence>
<evidence type="ECO:0007829" key="12">
    <source>
        <dbReference type="PDB" id="4J0X"/>
    </source>
</evidence>
<gene>
    <name type="primary">RRP9</name>
    <name type="ordered locus">YPR137W</name>
</gene>
<organism>
    <name type="scientific">Saccharomyces cerevisiae (strain ATCC 204508 / S288c)</name>
    <name type="common">Baker's yeast</name>
    <dbReference type="NCBI Taxonomy" id="559292"/>
    <lineage>
        <taxon>Eukaryota</taxon>
        <taxon>Fungi</taxon>
        <taxon>Dikarya</taxon>
        <taxon>Ascomycota</taxon>
        <taxon>Saccharomycotina</taxon>
        <taxon>Saccharomycetes</taxon>
        <taxon>Saccharomycetales</taxon>
        <taxon>Saccharomycetaceae</taxon>
        <taxon>Saccharomyces</taxon>
    </lineage>
</organism>
<sequence>MSDVTQQKKRKRSKGEVNPSKPTVDEEITDPSSNEDEQLEVSDEEDALESEEEFEGENPADKRRRLAKQYLENLKSEANDILTDNRNAEEKDLNNLKERTIDEYNNFDAGDLDKDIIASRLKEDVAEQQGRVFRYFGDKLLISEAKQSFTRVGENNLTCISCFQPVLNKYTFEESSNGDKNKGRLFAYTVSKDLQLTKYDITDFSKRPKKLKYAKGGAKYIPTSKHEYENTTEGHYDEILTVAASPDGKYVVTGGRDRKLIVWSTESLSPVKVIPTKDRRGEVLSLAFRKNSDQLYASCADFKIRTYSINQFSQLEILYGHHDIVEDISALAMERCVTVGARDRTAMLWKIPDETRLTFRGGDEPQKLLRRWMKENAKEGEDGEVKYPDESEAPLFFCEGSIDVVSMVDDFHFITGSDNGNICLWSLAKKKPIFTERIAHGILPEPSFNDISGETDEELRKRQLQGKKLLQPFWITSLYAIPYSNVFISGSWSGSLKVWKISDNLRSFELLGELSGAKGVVTKIQVVESGKHGKEKFRILASIAKEHRLGRWIANVSGARNGIYSAVIDQTGF</sequence>
<reference key="1">
    <citation type="journal article" date="1997" name="Nature">
        <title>The nucleotide sequence of Saccharomyces cerevisiae chromosome XVI.</title>
        <authorList>
            <person name="Bussey H."/>
            <person name="Storms R.K."/>
            <person name="Ahmed A."/>
            <person name="Albermann K."/>
            <person name="Allen E."/>
            <person name="Ansorge W."/>
            <person name="Araujo R."/>
            <person name="Aparicio A."/>
            <person name="Barrell B.G."/>
            <person name="Badcock K."/>
            <person name="Benes V."/>
            <person name="Botstein D."/>
            <person name="Bowman S."/>
            <person name="Brueckner M."/>
            <person name="Carpenter J."/>
            <person name="Cherry J.M."/>
            <person name="Chung E."/>
            <person name="Churcher C.M."/>
            <person name="Coster F."/>
            <person name="Davis K."/>
            <person name="Davis R.W."/>
            <person name="Dietrich F.S."/>
            <person name="Delius H."/>
            <person name="DiPaolo T."/>
            <person name="Dubois E."/>
            <person name="Duesterhoeft A."/>
            <person name="Duncan M."/>
            <person name="Floeth M."/>
            <person name="Fortin N."/>
            <person name="Friesen J.D."/>
            <person name="Fritz C."/>
            <person name="Goffeau A."/>
            <person name="Hall J."/>
            <person name="Hebling U."/>
            <person name="Heumann K."/>
            <person name="Hilbert H."/>
            <person name="Hillier L.W."/>
            <person name="Hunicke-Smith S."/>
            <person name="Hyman R.W."/>
            <person name="Johnston M."/>
            <person name="Kalman S."/>
            <person name="Kleine K."/>
            <person name="Komp C."/>
            <person name="Kurdi O."/>
            <person name="Lashkari D."/>
            <person name="Lew H."/>
            <person name="Lin A."/>
            <person name="Lin D."/>
            <person name="Louis E.J."/>
            <person name="Marathe R."/>
            <person name="Messenguy F."/>
            <person name="Mewes H.-W."/>
            <person name="Mirtipati S."/>
            <person name="Moestl D."/>
            <person name="Mueller-Auer S."/>
            <person name="Namath A."/>
            <person name="Nentwich U."/>
            <person name="Oefner P."/>
            <person name="Pearson D."/>
            <person name="Petel F.X."/>
            <person name="Pohl T.M."/>
            <person name="Purnelle B."/>
            <person name="Rajandream M.A."/>
            <person name="Rechmann S."/>
            <person name="Rieger M."/>
            <person name="Riles L."/>
            <person name="Roberts D."/>
            <person name="Schaefer M."/>
            <person name="Scharfe M."/>
            <person name="Scherens B."/>
            <person name="Schramm S."/>
            <person name="Schroeder M."/>
            <person name="Sdicu A.-M."/>
            <person name="Tettelin H."/>
            <person name="Urrestarazu L.A."/>
            <person name="Ushinsky S."/>
            <person name="Vierendeels F."/>
            <person name="Vissers S."/>
            <person name="Voss H."/>
            <person name="Walsh S.V."/>
            <person name="Wambutt R."/>
            <person name="Wang Y."/>
            <person name="Wedler E."/>
            <person name="Wedler H."/>
            <person name="Winnett E."/>
            <person name="Zhong W.-W."/>
            <person name="Zollner A."/>
            <person name="Vo D.H."/>
            <person name="Hani J."/>
        </authorList>
    </citation>
    <scope>NUCLEOTIDE SEQUENCE [LARGE SCALE GENOMIC DNA]</scope>
    <source>
        <strain>ATCC 204508 / S288c</strain>
    </source>
</reference>
<reference key="2">
    <citation type="journal article" date="2014" name="G3 (Bethesda)">
        <title>The reference genome sequence of Saccharomyces cerevisiae: Then and now.</title>
        <authorList>
            <person name="Engel S.R."/>
            <person name="Dietrich F.S."/>
            <person name="Fisk D.G."/>
            <person name="Binkley G."/>
            <person name="Balakrishnan R."/>
            <person name="Costanzo M.C."/>
            <person name="Dwight S.S."/>
            <person name="Hitz B.C."/>
            <person name="Karra K."/>
            <person name="Nash R.S."/>
            <person name="Weng S."/>
            <person name="Wong E.D."/>
            <person name="Lloyd P."/>
            <person name="Skrzypek M.S."/>
            <person name="Miyasato S.R."/>
            <person name="Simison M."/>
            <person name="Cherry J.M."/>
        </authorList>
    </citation>
    <scope>GENOME REANNOTATION</scope>
    <source>
        <strain>ATCC 204508 / S288c</strain>
    </source>
</reference>
<reference key="3">
    <citation type="journal article" date="2000" name="RNA">
        <title>Yeast Rrp9p is an evolutionarily conserved U3 snoRNP protein essential for early pre-rRNA processing cleavages and requires box C for its association.</title>
        <authorList>
            <person name="Venema J."/>
            <person name="Vos H.R."/>
            <person name="Faber A.W."/>
            <person name="van Venrooij W.J."/>
            <person name="Raue H.A."/>
        </authorList>
    </citation>
    <scope>FUNCTION</scope>
    <scope>ASSOCIATION WITH U3 SNORNA</scope>
</reference>
<reference key="4">
    <citation type="journal article" date="2002" name="Nature">
        <title>A large nucleolar U3 ribonucleoprotein required for 18S ribosomal RNA biogenesis.</title>
        <authorList>
            <person name="Dragon F."/>
            <person name="Gallagher J.E.G."/>
            <person name="Compagnone-Post P.A."/>
            <person name="Mitchell B.M."/>
            <person name="Porwancher K.A."/>
            <person name="Wehner K.A."/>
            <person name="Wormsley S."/>
            <person name="Settlage R.E."/>
            <person name="Shabanowitz J."/>
            <person name="Osheim Y."/>
            <person name="Beyer A.L."/>
            <person name="Hunt D.F."/>
            <person name="Baserga S.J."/>
        </authorList>
    </citation>
    <scope>IDENTIFICATION IN SSU PROCESSOME BY MASS SPECTROMETRY</scope>
</reference>
<reference key="5">
    <citation type="journal article" date="2003" name="Nature">
        <title>Global analysis of protein localization in budding yeast.</title>
        <authorList>
            <person name="Huh W.-K."/>
            <person name="Falvo J.V."/>
            <person name="Gerke L.C."/>
            <person name="Carroll A.S."/>
            <person name="Howson R.W."/>
            <person name="Weissman J.S."/>
            <person name="O'Shea E.K."/>
        </authorList>
    </citation>
    <scope>SUBCELLULAR LOCATION [LARGE SCALE ANALYSIS]</scope>
</reference>
<reference key="6">
    <citation type="journal article" date="2003" name="Nature">
        <title>Global analysis of protein expression in yeast.</title>
        <authorList>
            <person name="Ghaemmaghami S."/>
            <person name="Huh W.-K."/>
            <person name="Bower K."/>
            <person name="Howson R.W."/>
            <person name="Belle A."/>
            <person name="Dephoure N."/>
            <person name="O'Shea E.K."/>
            <person name="Weissman J.S."/>
        </authorList>
    </citation>
    <scope>LEVEL OF PROTEIN EXPRESSION [LARGE SCALE ANALYSIS]</scope>
</reference>
<reference key="7">
    <citation type="journal article" date="2008" name="Mol. Cell. Proteomics">
        <title>A multidimensional chromatography technology for in-depth phosphoproteome analysis.</title>
        <authorList>
            <person name="Albuquerque C.P."/>
            <person name="Smolka M.B."/>
            <person name="Payne S.H."/>
            <person name="Bafna V."/>
            <person name="Eng J."/>
            <person name="Zhou H."/>
        </authorList>
    </citation>
    <scope>PHOSPHORYLATION [LARGE SCALE ANALYSIS] AT SER-50</scope>
    <scope>IDENTIFICATION BY MASS SPECTROMETRY [LARGE SCALE ANALYSIS]</scope>
</reference>
<reference key="8">
    <citation type="journal article" date="2010" name="RNA">
        <title>The DEAD-box RNA helicase-like Utp25 is an SSU processome component.</title>
        <authorList>
            <person name="Charette J.M."/>
            <person name="Baserga S.J."/>
        </authorList>
    </citation>
    <scope>INTERACTION WITH UTP25</scope>
</reference>
<reference key="9">
    <citation type="journal article" date="2012" name="Proc. Natl. Acad. Sci. U.S.A.">
        <title>N-terminal acetylome analyses and functional insights of the N-terminal acetyltransferase NatB.</title>
        <authorList>
            <person name="Van Damme P."/>
            <person name="Lasa M."/>
            <person name="Polevoda B."/>
            <person name="Gazquez C."/>
            <person name="Elosegui-Artola A."/>
            <person name="Kim D.S."/>
            <person name="De Juan-Pardo E."/>
            <person name="Demeyer K."/>
            <person name="Hole K."/>
            <person name="Larrea E."/>
            <person name="Timmerman E."/>
            <person name="Prieto J."/>
            <person name="Arnesen T."/>
            <person name="Sherman F."/>
            <person name="Gevaert K."/>
            <person name="Aldabe R."/>
        </authorList>
    </citation>
    <scope>ACETYLATION [LARGE SCALE ANALYSIS] AT SER-2</scope>
    <scope>CLEAVAGE OF INITIATOR METHIONINE [LARGE SCALE ANALYSIS]</scope>
    <scope>IDENTIFICATION BY MASS SPECTROMETRY [LARGE SCALE ANALYSIS]</scope>
</reference>
<feature type="initiator methionine" description="Removed" evidence="11">
    <location>
        <position position="1"/>
    </location>
</feature>
<feature type="chain" id="PRO_0000269482" description="Ribosomal RNA-processing protein 9">
    <location>
        <begin position="2"/>
        <end position="573"/>
    </location>
</feature>
<feature type="repeat" description="WD 1">
    <location>
        <begin position="234"/>
        <end position="273"/>
    </location>
</feature>
<feature type="repeat" description="WD 2">
    <location>
        <begin position="278"/>
        <end position="317"/>
    </location>
</feature>
<feature type="repeat" description="WD 3">
    <location>
        <begin position="320"/>
        <end position="359"/>
    </location>
</feature>
<feature type="repeat" description="WD 4">
    <location>
        <begin position="397"/>
        <end position="435"/>
    </location>
</feature>
<feature type="repeat" description="WD 5">
    <location>
        <begin position="471"/>
        <end position="509"/>
    </location>
</feature>
<feature type="repeat" description="WD 6">
    <location>
        <begin position="516"/>
        <end position="562"/>
    </location>
</feature>
<feature type="region of interest" description="Disordered" evidence="3">
    <location>
        <begin position="1"/>
        <end position="63"/>
    </location>
</feature>
<feature type="coiled-coil region" evidence="2">
    <location>
        <begin position="32"/>
        <end position="106"/>
    </location>
</feature>
<feature type="compositionally biased region" description="Acidic residues" evidence="3">
    <location>
        <begin position="25"/>
        <end position="58"/>
    </location>
</feature>
<feature type="modified residue" description="N-acetylserine" evidence="11">
    <location>
        <position position="2"/>
    </location>
</feature>
<feature type="modified residue" description="Phosphoserine" evidence="10">
    <location>
        <position position="50"/>
    </location>
</feature>
<feature type="turn" evidence="12">
    <location>
        <begin position="137"/>
        <end position="139"/>
    </location>
</feature>
<feature type="strand" evidence="12">
    <location>
        <begin position="141"/>
        <end position="151"/>
    </location>
</feature>
<feature type="strand" evidence="12">
    <location>
        <begin position="153"/>
        <end position="155"/>
    </location>
</feature>
<feature type="strand" evidence="12">
    <location>
        <begin position="157"/>
        <end position="163"/>
    </location>
</feature>
<feature type="strand" evidence="12">
    <location>
        <begin position="186"/>
        <end position="191"/>
    </location>
</feature>
<feature type="strand" evidence="12">
    <location>
        <begin position="194"/>
        <end position="200"/>
    </location>
</feature>
<feature type="strand" evidence="12">
    <location>
        <begin position="209"/>
        <end position="215"/>
    </location>
</feature>
<feature type="helix" evidence="12">
    <location>
        <begin position="218"/>
        <end position="220"/>
    </location>
</feature>
<feature type="strand" evidence="12">
    <location>
        <begin position="239"/>
        <end position="244"/>
    </location>
</feature>
<feature type="strand" evidence="12">
    <location>
        <begin position="248"/>
        <end position="255"/>
    </location>
</feature>
<feature type="strand" evidence="12">
    <location>
        <begin position="258"/>
        <end position="264"/>
    </location>
</feature>
<feature type="turn" evidence="12">
    <location>
        <begin position="265"/>
        <end position="268"/>
    </location>
</feature>
<feature type="strand" evidence="12">
    <location>
        <begin position="269"/>
        <end position="275"/>
    </location>
</feature>
<feature type="strand" evidence="12">
    <location>
        <begin position="283"/>
        <end position="288"/>
    </location>
</feature>
<feature type="strand" evidence="12">
    <location>
        <begin position="292"/>
        <end position="299"/>
    </location>
</feature>
<feature type="strand" evidence="12">
    <location>
        <begin position="302"/>
        <end position="308"/>
    </location>
</feature>
<feature type="turn" evidence="12">
    <location>
        <begin position="309"/>
        <end position="312"/>
    </location>
</feature>
<feature type="strand" evidence="12">
    <location>
        <begin position="313"/>
        <end position="319"/>
    </location>
</feature>
<feature type="strand" evidence="12">
    <location>
        <begin position="327"/>
        <end position="329"/>
    </location>
</feature>
<feature type="strand" evidence="12">
    <location>
        <begin position="332"/>
        <end position="339"/>
    </location>
</feature>
<feature type="strand" evidence="12">
    <location>
        <begin position="345"/>
        <end position="350"/>
    </location>
</feature>
<feature type="turn" evidence="12">
    <location>
        <begin position="351"/>
        <end position="354"/>
    </location>
</feature>
<feature type="strand" evidence="12">
    <location>
        <begin position="355"/>
        <end position="360"/>
    </location>
</feature>
<feature type="helix" evidence="12">
    <location>
        <begin position="365"/>
        <end position="372"/>
    </location>
</feature>
<feature type="strand" evidence="12">
    <location>
        <begin position="402"/>
        <end position="409"/>
    </location>
</feature>
<feature type="strand" evidence="12">
    <location>
        <begin position="412"/>
        <end position="417"/>
    </location>
</feature>
<feature type="strand" evidence="12">
    <location>
        <begin position="422"/>
        <end position="426"/>
    </location>
</feature>
<feature type="strand" evidence="12">
    <location>
        <begin position="433"/>
        <end position="436"/>
    </location>
</feature>
<feature type="turn" evidence="12">
    <location>
        <begin position="437"/>
        <end position="440"/>
    </location>
</feature>
<feature type="strand" evidence="12">
    <location>
        <begin position="477"/>
        <end position="480"/>
    </location>
</feature>
<feature type="strand" evidence="12">
    <location>
        <begin position="484"/>
        <end position="490"/>
    </location>
</feature>
<feature type="strand" evidence="12">
    <location>
        <begin position="492"/>
        <end position="494"/>
    </location>
</feature>
<feature type="strand" evidence="12">
    <location>
        <begin position="496"/>
        <end position="501"/>
    </location>
</feature>
<feature type="strand" evidence="12">
    <location>
        <begin position="508"/>
        <end position="514"/>
    </location>
</feature>
<feature type="strand" evidence="12">
    <location>
        <begin position="519"/>
        <end position="528"/>
    </location>
</feature>
<feature type="strand" evidence="12">
    <location>
        <begin position="537"/>
        <end position="546"/>
    </location>
</feature>
<feature type="strand" evidence="12">
    <location>
        <begin position="562"/>
        <end position="569"/>
    </location>
</feature>
<keyword id="KW-0002">3D-structure</keyword>
<keyword id="KW-0007">Acetylation</keyword>
<keyword id="KW-0175">Coiled coil</keyword>
<keyword id="KW-0539">Nucleus</keyword>
<keyword id="KW-0597">Phosphoprotein</keyword>
<keyword id="KW-1185">Reference proteome</keyword>
<keyword id="KW-0677">Repeat</keyword>
<keyword id="KW-0687">Ribonucleoprotein</keyword>
<keyword id="KW-0690">Ribosome biogenesis</keyword>
<keyword id="KW-0698">rRNA processing</keyword>
<keyword id="KW-0853">WD repeat</keyword>
<dbReference type="EMBL" id="U40829">
    <property type="protein sequence ID" value="AAB68277.1"/>
    <property type="molecule type" value="Genomic_DNA"/>
</dbReference>
<dbReference type="EMBL" id="BK006949">
    <property type="protein sequence ID" value="DAA11549.1"/>
    <property type="molecule type" value="Genomic_DNA"/>
</dbReference>
<dbReference type="PIR" id="S69026">
    <property type="entry name" value="S69026"/>
</dbReference>
<dbReference type="RefSeq" id="NP_015463.1">
    <property type="nucleotide sequence ID" value="NM_001184234.1"/>
</dbReference>
<dbReference type="PDB" id="4J0X">
    <property type="method" value="X-ray"/>
    <property type="resolution" value="2.50 A"/>
    <property type="chains" value="A/B=127-573"/>
</dbReference>
<dbReference type="PDB" id="5JPQ">
    <property type="method" value="EM"/>
    <property type="resolution" value="7.30 A"/>
    <property type="chains" value="Y=1-573"/>
</dbReference>
<dbReference type="PDB" id="5TZS">
    <property type="method" value="EM"/>
    <property type="resolution" value="5.10 A"/>
    <property type="chains" value="g=1-573"/>
</dbReference>
<dbReference type="PDB" id="5WLC">
    <property type="method" value="EM"/>
    <property type="resolution" value="3.80 A"/>
    <property type="chains" value="SG=1-573"/>
</dbReference>
<dbReference type="PDB" id="5WYJ">
    <property type="method" value="EM"/>
    <property type="resolution" value="8.70 A"/>
    <property type="chains" value="3F=1-573"/>
</dbReference>
<dbReference type="PDB" id="5WYK">
    <property type="method" value="EM"/>
    <property type="resolution" value="4.50 A"/>
    <property type="chains" value="3F=1-573"/>
</dbReference>
<dbReference type="PDB" id="6KE6">
    <property type="method" value="EM"/>
    <property type="resolution" value="3.40 A"/>
    <property type="chains" value="3F=1-573"/>
</dbReference>
<dbReference type="PDB" id="6LQP">
    <property type="method" value="EM"/>
    <property type="resolution" value="3.20 A"/>
    <property type="chains" value="3F=1-573"/>
</dbReference>
<dbReference type="PDB" id="6LQQ">
    <property type="method" value="EM"/>
    <property type="resolution" value="4.10 A"/>
    <property type="chains" value="3F=1-573"/>
</dbReference>
<dbReference type="PDB" id="6LQR">
    <property type="method" value="EM"/>
    <property type="resolution" value="8.60 A"/>
    <property type="chains" value="3F=1-573"/>
</dbReference>
<dbReference type="PDB" id="6LQS">
    <property type="method" value="EM"/>
    <property type="resolution" value="3.80 A"/>
    <property type="chains" value="3F=1-573"/>
</dbReference>
<dbReference type="PDB" id="6LQT">
    <property type="method" value="EM"/>
    <property type="resolution" value="4.90 A"/>
    <property type="chains" value="3F=1-572"/>
</dbReference>
<dbReference type="PDB" id="6LQU">
    <property type="method" value="EM"/>
    <property type="resolution" value="3.70 A"/>
    <property type="chains" value="3F=1-573"/>
</dbReference>
<dbReference type="PDB" id="6LQV">
    <property type="method" value="EM"/>
    <property type="resolution" value="4.80 A"/>
    <property type="chains" value="3F=1-573"/>
</dbReference>
<dbReference type="PDB" id="6ND4">
    <property type="method" value="EM"/>
    <property type="resolution" value="4.30 A"/>
    <property type="chains" value="g=1-573"/>
</dbReference>
<dbReference type="PDB" id="6ZQA">
    <property type="method" value="EM"/>
    <property type="resolution" value="4.40 A"/>
    <property type="chains" value="CH=1-573"/>
</dbReference>
<dbReference type="PDB" id="6ZQB">
    <property type="method" value="EM"/>
    <property type="resolution" value="3.90 A"/>
    <property type="chains" value="CH=1-573"/>
</dbReference>
<dbReference type="PDB" id="6ZQC">
    <property type="method" value="EM"/>
    <property type="resolution" value="3.80 A"/>
    <property type="chains" value="CH=1-573"/>
</dbReference>
<dbReference type="PDB" id="6ZQD">
    <property type="method" value="EM"/>
    <property type="resolution" value="3.80 A"/>
    <property type="chains" value="CH=1-573"/>
</dbReference>
<dbReference type="PDB" id="6ZQE">
    <property type="method" value="EM"/>
    <property type="resolution" value="7.10 A"/>
    <property type="chains" value="CH=1-573"/>
</dbReference>
<dbReference type="PDB" id="7AJT">
    <property type="method" value="EM"/>
    <property type="resolution" value="4.60 A"/>
    <property type="chains" value="CH=1-573"/>
</dbReference>
<dbReference type="PDB" id="7AJU">
    <property type="method" value="EM"/>
    <property type="resolution" value="3.80 A"/>
    <property type="chains" value="CH=1-573"/>
</dbReference>
<dbReference type="PDB" id="7D4I">
    <property type="method" value="EM"/>
    <property type="resolution" value="4.00 A"/>
    <property type="chains" value="3F=1-573"/>
</dbReference>
<dbReference type="PDB" id="7D5S">
    <property type="method" value="EM"/>
    <property type="resolution" value="4.60 A"/>
    <property type="chains" value="3F=1-573"/>
</dbReference>
<dbReference type="PDB" id="7D5T">
    <property type="method" value="EM"/>
    <property type="resolution" value="6.00 A"/>
    <property type="chains" value="3F=1-573"/>
</dbReference>
<dbReference type="PDB" id="7D63">
    <property type="method" value="EM"/>
    <property type="resolution" value="12.30 A"/>
    <property type="chains" value="3F=1-573"/>
</dbReference>
<dbReference type="PDB" id="7SUK">
    <property type="method" value="EM"/>
    <property type="resolution" value="3.99 A"/>
    <property type="chains" value="SG=107-570"/>
</dbReference>
<dbReference type="PDBsum" id="4J0X"/>
<dbReference type="PDBsum" id="5JPQ"/>
<dbReference type="PDBsum" id="5TZS"/>
<dbReference type="PDBsum" id="5WLC"/>
<dbReference type="PDBsum" id="5WYJ"/>
<dbReference type="PDBsum" id="5WYK"/>
<dbReference type="PDBsum" id="6KE6"/>
<dbReference type="PDBsum" id="6LQP"/>
<dbReference type="PDBsum" id="6LQQ"/>
<dbReference type="PDBsum" id="6LQR"/>
<dbReference type="PDBsum" id="6LQS"/>
<dbReference type="PDBsum" id="6LQT"/>
<dbReference type="PDBsum" id="6LQU"/>
<dbReference type="PDBsum" id="6LQV"/>
<dbReference type="PDBsum" id="6ND4"/>
<dbReference type="PDBsum" id="6ZQA"/>
<dbReference type="PDBsum" id="6ZQB"/>
<dbReference type="PDBsum" id="6ZQC"/>
<dbReference type="PDBsum" id="6ZQD"/>
<dbReference type="PDBsum" id="6ZQE"/>
<dbReference type="PDBsum" id="7AJT"/>
<dbReference type="PDBsum" id="7AJU"/>
<dbReference type="PDBsum" id="7D4I"/>
<dbReference type="PDBsum" id="7D5S"/>
<dbReference type="PDBsum" id="7D5T"/>
<dbReference type="PDBsum" id="7D63"/>
<dbReference type="PDBsum" id="7SUK"/>
<dbReference type="EMDB" id="EMD-0441"/>
<dbReference type="EMDB" id="EMD-0949"/>
<dbReference type="EMDB" id="EMD-0950"/>
<dbReference type="EMDB" id="EMD-0951"/>
<dbReference type="EMDB" id="EMD-0952"/>
<dbReference type="EMDB" id="EMD-0953"/>
<dbReference type="EMDB" id="EMD-0954"/>
<dbReference type="EMDB" id="EMD-0955"/>
<dbReference type="EMDB" id="EMD-11357"/>
<dbReference type="EMDB" id="EMD-11358"/>
<dbReference type="EMDB" id="EMD-11359"/>
<dbReference type="EMDB" id="EMD-11360"/>
<dbReference type="EMDB" id="EMD-11361"/>
<dbReference type="EMDB" id="EMD-11807"/>
<dbReference type="EMDB" id="EMD-11808"/>
<dbReference type="EMDB" id="EMD-30574"/>
<dbReference type="EMDB" id="EMD-30584"/>
<dbReference type="EMDB" id="EMD-30585"/>
<dbReference type="EMDB" id="EMD-30588"/>
<dbReference type="EMDB" id="EMD-6695"/>
<dbReference type="EMDB" id="EMD-6696"/>
<dbReference type="EMDB" id="EMD-8473"/>
<dbReference type="EMDB" id="EMD-8859"/>
<dbReference type="EMDB" id="EMD-9964"/>
<dbReference type="SMR" id="Q06506"/>
<dbReference type="BioGRID" id="36303">
    <property type="interactions" value="142"/>
</dbReference>
<dbReference type="ComplexPortal" id="CPX-1604">
    <property type="entry name" value="Small ribosomal subunit processome"/>
</dbReference>
<dbReference type="DIP" id="DIP-6537N"/>
<dbReference type="FunCoup" id="Q06506">
    <property type="interactions" value="1305"/>
</dbReference>
<dbReference type="IntAct" id="Q06506">
    <property type="interactions" value="89"/>
</dbReference>
<dbReference type="MINT" id="Q06506"/>
<dbReference type="STRING" id="4932.YPR137W"/>
<dbReference type="iPTMnet" id="Q06506"/>
<dbReference type="PaxDb" id="4932-YPR137W"/>
<dbReference type="PeptideAtlas" id="Q06506"/>
<dbReference type="EnsemblFungi" id="YPR137W_mRNA">
    <property type="protein sequence ID" value="YPR137W"/>
    <property type="gene ID" value="YPR137W"/>
</dbReference>
<dbReference type="GeneID" id="856255"/>
<dbReference type="KEGG" id="sce:YPR137W"/>
<dbReference type="AGR" id="SGD:S000006341"/>
<dbReference type="SGD" id="S000006341">
    <property type="gene designation" value="RRP9"/>
</dbReference>
<dbReference type="VEuPathDB" id="FungiDB:YPR137W"/>
<dbReference type="eggNOG" id="KOG0299">
    <property type="taxonomic scope" value="Eukaryota"/>
</dbReference>
<dbReference type="GeneTree" id="ENSGT00940000158328"/>
<dbReference type="HOGENOM" id="CLU_014017_1_0_1"/>
<dbReference type="InParanoid" id="Q06506"/>
<dbReference type="OMA" id="CSLRIWK"/>
<dbReference type="OrthoDB" id="189968at2759"/>
<dbReference type="BioCyc" id="YEAST:G3O-34272-MONOMER"/>
<dbReference type="Reactome" id="R-SCE-6791226">
    <property type="pathway name" value="Major pathway of rRNA processing in the nucleolus and cytosol"/>
</dbReference>
<dbReference type="BioGRID-ORCS" id="856255">
    <property type="hits" value="9 hits in 10 CRISPR screens"/>
</dbReference>
<dbReference type="CD-CODE" id="BDAE0F88">
    <property type="entry name" value="Nucleolus"/>
</dbReference>
<dbReference type="EvolutionaryTrace" id="Q06506"/>
<dbReference type="PRO" id="PR:Q06506"/>
<dbReference type="Proteomes" id="UP000002311">
    <property type="component" value="Chromosome XVI"/>
</dbReference>
<dbReference type="RNAct" id="Q06506">
    <property type="molecule type" value="protein"/>
</dbReference>
<dbReference type="GO" id="GO:0030686">
    <property type="term" value="C:90S preribosome"/>
    <property type="evidence" value="ECO:0007005"/>
    <property type="project" value="SGD"/>
</dbReference>
<dbReference type="GO" id="GO:0031428">
    <property type="term" value="C:box C/D methylation guide snoRNP complex"/>
    <property type="evidence" value="ECO:0000314"/>
    <property type="project" value="SGD"/>
</dbReference>
<dbReference type="GO" id="GO:0005730">
    <property type="term" value="C:nucleolus"/>
    <property type="evidence" value="ECO:0000314"/>
    <property type="project" value="SGD"/>
</dbReference>
<dbReference type="GO" id="GO:0005654">
    <property type="term" value="C:nucleoplasm"/>
    <property type="evidence" value="ECO:0000304"/>
    <property type="project" value="Reactome"/>
</dbReference>
<dbReference type="GO" id="GO:0032040">
    <property type="term" value="C:small-subunit processome"/>
    <property type="evidence" value="ECO:0000314"/>
    <property type="project" value="SGD"/>
</dbReference>
<dbReference type="GO" id="GO:0030515">
    <property type="term" value="F:snoRNA binding"/>
    <property type="evidence" value="ECO:0000318"/>
    <property type="project" value="GO_Central"/>
</dbReference>
<dbReference type="GO" id="GO:0034511">
    <property type="term" value="F:U3 snoRNA binding"/>
    <property type="evidence" value="ECO:0000314"/>
    <property type="project" value="SGD"/>
</dbReference>
<dbReference type="GO" id="GO:0000480">
    <property type="term" value="P:endonucleolytic cleavage in 5'-ETS of tricistronic rRNA transcript (SSU-rRNA, 5.8S rRNA, LSU-rRNA)"/>
    <property type="evidence" value="ECO:0000315"/>
    <property type="project" value="SGD"/>
</dbReference>
<dbReference type="GO" id="GO:0000447">
    <property type="term" value="P:endonucleolytic cleavage in ITS1 to separate SSU-rRNA from 5.8S rRNA and LSU-rRNA from tricistronic rRNA transcript (SSU-rRNA, 5.8S rRNA, LSU-rRNA)"/>
    <property type="evidence" value="ECO:0000315"/>
    <property type="project" value="SGD"/>
</dbReference>
<dbReference type="GO" id="GO:0000472">
    <property type="term" value="P:endonucleolytic cleavage to generate mature 5'-end of SSU-rRNA from (SSU-rRNA, 5.8S rRNA, LSU-rRNA)"/>
    <property type="evidence" value="ECO:0000315"/>
    <property type="project" value="SGD"/>
</dbReference>
<dbReference type="GO" id="GO:0030490">
    <property type="term" value="P:maturation of SSU-rRNA"/>
    <property type="evidence" value="ECO:0000303"/>
    <property type="project" value="ComplexPortal"/>
</dbReference>
<dbReference type="FunFam" id="2.130.10.10:FF:000644">
    <property type="entry name" value="Rrp9p"/>
    <property type="match status" value="1"/>
</dbReference>
<dbReference type="Gene3D" id="2.130.10.10">
    <property type="entry name" value="YVTN repeat-like/Quinoprotein amine dehydrogenase"/>
    <property type="match status" value="1"/>
</dbReference>
<dbReference type="InterPro" id="IPR039241">
    <property type="entry name" value="Rrp9-like"/>
</dbReference>
<dbReference type="InterPro" id="IPR015943">
    <property type="entry name" value="WD40/YVTN_repeat-like_dom_sf"/>
</dbReference>
<dbReference type="InterPro" id="IPR036322">
    <property type="entry name" value="WD40_repeat_dom_sf"/>
</dbReference>
<dbReference type="InterPro" id="IPR001680">
    <property type="entry name" value="WD40_rpt"/>
</dbReference>
<dbReference type="PANTHER" id="PTHR19865">
    <property type="entry name" value="U3 SMALL NUCLEOLAR RNA INTERACTING PROTEIN 2"/>
    <property type="match status" value="1"/>
</dbReference>
<dbReference type="PANTHER" id="PTHR19865:SF0">
    <property type="entry name" value="U3 SMALL NUCLEOLAR RNA-INTERACTING PROTEIN 2"/>
    <property type="match status" value="1"/>
</dbReference>
<dbReference type="Pfam" id="PF00400">
    <property type="entry name" value="WD40"/>
    <property type="match status" value="2"/>
</dbReference>
<dbReference type="SMART" id="SM00320">
    <property type="entry name" value="WD40"/>
    <property type="match status" value="5"/>
</dbReference>
<dbReference type="SUPFAM" id="SSF50978">
    <property type="entry name" value="WD40 repeat-like"/>
    <property type="match status" value="1"/>
</dbReference>
<dbReference type="PROSITE" id="PS50082">
    <property type="entry name" value="WD_REPEATS_2"/>
    <property type="match status" value="1"/>
</dbReference>
<dbReference type="PROSITE" id="PS50294">
    <property type="entry name" value="WD_REPEATS_REGION"/>
    <property type="match status" value="1"/>
</dbReference>
<proteinExistence type="evidence at protein level"/>
<comment type="function">
    <text evidence="4">Involved in nucleolar processing of pre-18S ribosomal RNA. Required for efficient pre-rRNA cleavage at sites A0, A1 and A2, and biosynthesis of 18S rRNA.</text>
</comment>
<comment type="subunit">
    <text evidence="5 8">Interacts with UTP25. Component of the ribosomal small subunit (SSU) processome composed of at least 40 protein subunits and snoRNA U3.</text>
</comment>
<comment type="interaction">
    <interactant intactId="EBI-35124">
        <id>Q06506</id>
    </interactant>
    <interactant intactId="EBI-34377">
        <id>Q06132</id>
        <label>SGD1</label>
    </interactant>
    <organismsDiffer>false</organismsDiffer>
    <experiments>3</experiments>
</comment>
<comment type="interaction">
    <interactant intactId="EBI-35124">
        <id>Q06506</id>
    </interactant>
    <interactant intactId="EBI-1878">
        <id>P53254</id>
        <label>UTP22</label>
    </interactant>
    <organismsDiffer>false</organismsDiffer>
    <experiments>5</experiments>
</comment>
<comment type="subcellular location">
    <subcellularLocation>
        <location evidence="6">Nucleus</location>
        <location evidence="6">Nucleolus</location>
    </subcellularLocation>
</comment>
<comment type="domain">
    <text evidence="1">The WD domains are required for nucleolar localization and U3 small nucleolar RNAs binding.</text>
</comment>
<comment type="miscellaneous">
    <text evidence="7">Present with 5130 molecules/cell in log phase SD medium.</text>
</comment>
<comment type="similarity">
    <text evidence="9">Belongs to the WD repeat RRP9 family.</text>
</comment>
<accession>Q06506</accession>
<accession>D6W4D3</accession>
<protein>
    <recommendedName>
        <fullName>Ribosomal RNA-processing protein 9</fullName>
    </recommendedName>
</protein>
<name>RRP9_YEAST</name>